<name>BEA1_GIBF5</name>
<sequence length="3135" mass="346309">MTSLNTKSGTPVVPLLLRSDDASHTDTLVEEVSCSLGLGRDRIENILPSTAFQQDVIDCAGSEKQRSIGHVAYEISNDIDISKLAAAWKDTINRTPALRTCAFTSSSGETYQVILKDSFVFSWMFSTSADQKDAVVKDEAAAAASGPRCNRFVLLDDPIQKKILIWTFSHALVDTSFQERILGRVLKAYTHGHDELSNRPYTPESSDPEDDGLSLTPTDGSKTPETEGLHPATQYWKNYLSDLNASAFPHLTSPLAVPYPNAKSEHRITFTASSSSTWPSVAVCRTALAILLSRYTHSQEALFGVVTEQQQLLVNGPTRTVVPFRVHCASDQSLSDIIDVVNANDDAIRQFADVGLRSISSTGDDGVAASGFQTVLLVTEGDNEQSSSTFEILQKTEESELFMPCTNRALLLHCQIASDGLSIIARYDKSLIHSQQIARLLRQLGQLIQRLRGSPDKLPSAGELDISTSEDQAEIQSWNSHPIPSQPTLIHKEMLKTASLSPSKVAICAWNGEWTYSELDNITSRLAALIKFSTPDQEHAILPIYFEKSKWVVASMLAVIKAGHAFALIDPNDPPARVSQVVGQTGATVALTSKLYRSKVQGIIERCIIVDDDLVQSLICTCALKPDPTLAKVTPEDLAYVIFTSGSTGDPKGIMIEHRAFSSCALQFGSALGINSDTRALQFGSHAFGACLLEIMTTLIHGGCVCIPSDDDRMNNVPAFVNRANVNWMMATPSYMGTFQPDDVPGLKTLVLVGEQMSPSVNAIWAPRVQVLDGYGQSESSSICFVGKISSSGADPNNIGHSVGAHSWIIDPSDPNRLVPIGAIGELVIESPGIARDYIIPPPTENSPFFSTVPPWYPFKELPNGIKFYRTGDLARYASDGTVVCLGRMDSQVKIRGQRVELGAVETHLRQQLPDDMSIVVEAVKPSDLPTSTVLVAFLITEATKSVRDATILDLAATKAMSVKLEHVLPRHSIPSCYISMQHLPRTATGKVDRRKLRSIGRDMLAQQLQGTSFRPSQLSSTTTSSQSKLEEVWRQCLGLEPGAANINSTFFELGGHSITAIKMVNMARSAGIDLKVSDIYQNPTLAGLEAIVNGSAEPYAIIPTTTRDGPVEQSYSQGRLWFLDQLEVGALWYLIPYAVRMRGLVDIDALSRALMALEQRHETLRTTFEDCDGAGVQIIHKILSKKLRVVDAPDSDYLDLLKQEQTTPFDLTSEAGWRALLIRLNDTDYILSIVMHHIVSDGWSIDVLRHDLSQLYAAALQGRDLASAMNPLPIQYSDFAMWQKQEAQALEHEKQLDYWKRQLADCSPAKLPTDFPRPALLSGEAGVVPVSIDRQLYQNLRDFCNENNTTSFAVLLAAFRAAHYRLTGVDDAVIGTPIANRNRWELENIIGFFVNTQCMRITVDDQDTFGSLVSQVRATTTAAFENEDVPFERVVSTMLPGSRDLSRTPLAQLIFAVHSQKDLGRFELQGLESEVVASKAYTRFDIEFHLFQEADGLRGSCNFATDLFRPETVENMVSVFFQILRNGLEKPNIPISVLPLTDGIEELRRLDLLRIKKVEYPRDASLVDIFRTQVAAYPDSLAVVDSSSRLTYTELDLQSDRLAARLRRQGMPAETLVGVLAPRSCEAIVAIIGILKANLAYLPFDVKSPSARLEDILSSIPGQTIVLLGSDVPVPELSIPGLEFMRIVDAIECCDTNNLNGHAHVDNSNPTATSLAYVLFTSGSTGRPKGVMVEHRVIVRLMTSNIIPDFPVQPRSAHMFNIAFDGATYEIFFTLLNGGTLVCIDYMTTLDVKALQDVFLKEKINAACMAPALLKLYLTDARDALRGLDFLMAAGDRFDGQDAIEAQSLVRGQCYNGYGPTENGIMSTRYPIAVGDSFINGVPIGRAVNNSGAYVTDLNQQLVGVGVMGELVVTGDGLARGYFDPALNENRFIHIEVDGQRVRAYRTGDRVRYRVGDGLIEFFGRMDTQFKIRGNRIESAEVEAAMLGHGSVRDAAVVVQKDDGEKADLVGFVVIDHDHSLEGDANDNQVEGWQDHFETEMYADIGDIDPFTIGKDFKGWTSMYDGSEIDKVEMQEWLDDTIKTLRDGQAPGHVLEVGTGSGMILFNLGDGLQSYRGLEPSKSAAAFTNSVIKSVPSLASKAEVHVGTAQDVSQLTDLHPDLVVINSVAQYFPSPEYLAQVADTLIHIPGVKRLFFGDMRTNATNKHFLAARAIRTLGDTATKDFVRQKMAELEEREEELLVEPAFFTALQDRFPDLVHHVEILPKNMHATNELSAYRYAAVVHIRDSDSVPVHTIEKSTWVDFGASRMDRTSLLQFLRRSKGSPTVAISNIPFAKTIFERQIVESLEAEDESKLDGAVWISAVGSDADSRASLSVPDLRRLAEEAGFRLEVSAARQWSQSGALDAVFHHLPSPSDTRRTLIKFPNDNHLRSSATLSNRPLQGLQRRRATLQVRERLQSLLPSYMIPSSIVVLDQMPLNPNGKVDRKELARQARIMPKQQTALPVQAVPISDIEAILCDEATATFGMKVDISDDFFKLGGHSLLATKLISRVEQRFNVRVTVKDVFDNPVFANLAVVIREGLASRTTLTNSQDKQGWSARVAPRTETEITLCDEASKLLGIEVGITDNFFDLGGHSMMATKLAMRLGRRLDTTIVVKDIFDYPVLFQLSKKLESTDSGTDNEEVQVDDYTPFELLSLENPQDFIQRQICSQLNVSLESIQDMYQSTQMQKSFLFSPGTGSPRPLTPFYIDFPVDSDPPTLVNACHSLVQHIDMFRTVFVLASEQLYQVVLKHLEVPIETIVTNQNVNTATNDFLVEHAQDPIRLGESLIRIAILKQSSSVRVLLRLSHALYDGLSLEPIVRNLHILFNGMSLLPPTQFRRYMEYTANSQEKGFEFWRDVIGDSPMTILSDAGNGAYHREVSPSKALHLSKVVSVPSQAIRSSIATQATVFNSACALVLSKESRSSDVVFGRIVSGRQGLPVNCQDIIGPCTNAVPVRAHIGTDGNHHQMLRDMQDQYLRSLPFETLGFEEIKRNCTDWPDSTTNFACCVTYHNFEYHPESEVEQQRVEMGVLSKHVELRKDEPLYDLAIAGEVEPDGMSLKVTIIARAHLFEEERVQYFLEEVCNTFQTLNFSL</sequence>
<dbReference type="EC" id="6.1.2.-" evidence="1"/>
<dbReference type="EC" id="2.1.1.-" evidence="1"/>
<dbReference type="EMBL" id="HF679031">
    <property type="protein sequence ID" value="CCT73878.1"/>
    <property type="molecule type" value="Genomic_DNA"/>
</dbReference>
<dbReference type="SMR" id="S0EN43"/>
<dbReference type="STRING" id="1279085.S0EN43"/>
<dbReference type="EnsemblFungi" id="CCT73878">
    <property type="protein sequence ID" value="CCT73878"/>
    <property type="gene ID" value="FFUJ_09296"/>
</dbReference>
<dbReference type="VEuPathDB" id="FungiDB:FFUJ_09296"/>
<dbReference type="HOGENOM" id="CLU_000022_60_1_1"/>
<dbReference type="Proteomes" id="UP000016800">
    <property type="component" value="Chromosome 9"/>
</dbReference>
<dbReference type="GO" id="GO:0005737">
    <property type="term" value="C:cytoplasm"/>
    <property type="evidence" value="ECO:0007669"/>
    <property type="project" value="TreeGrafter"/>
</dbReference>
<dbReference type="GO" id="GO:0016853">
    <property type="term" value="F:isomerase activity"/>
    <property type="evidence" value="ECO:0007669"/>
    <property type="project" value="UniProtKB-KW"/>
</dbReference>
<dbReference type="GO" id="GO:0016874">
    <property type="term" value="F:ligase activity"/>
    <property type="evidence" value="ECO:0007669"/>
    <property type="project" value="UniProtKB-KW"/>
</dbReference>
<dbReference type="GO" id="GO:0008168">
    <property type="term" value="F:methyltransferase activity"/>
    <property type="evidence" value="ECO:0007669"/>
    <property type="project" value="UniProtKB-KW"/>
</dbReference>
<dbReference type="GO" id="GO:0031177">
    <property type="term" value="F:phosphopantetheine binding"/>
    <property type="evidence" value="ECO:0007669"/>
    <property type="project" value="InterPro"/>
</dbReference>
<dbReference type="GO" id="GO:0043041">
    <property type="term" value="P:amino acid activation for nonribosomal peptide biosynthetic process"/>
    <property type="evidence" value="ECO:0007669"/>
    <property type="project" value="TreeGrafter"/>
</dbReference>
<dbReference type="GO" id="GO:0032259">
    <property type="term" value="P:methylation"/>
    <property type="evidence" value="ECO:0007669"/>
    <property type="project" value="UniProtKB-KW"/>
</dbReference>
<dbReference type="GO" id="GO:0044550">
    <property type="term" value="P:secondary metabolite biosynthetic process"/>
    <property type="evidence" value="ECO:0007669"/>
    <property type="project" value="TreeGrafter"/>
</dbReference>
<dbReference type="CDD" id="cd05930">
    <property type="entry name" value="A_NRPS"/>
    <property type="match status" value="1"/>
</dbReference>
<dbReference type="CDD" id="cd05918">
    <property type="entry name" value="A_NRPS_SidN3_like"/>
    <property type="match status" value="1"/>
</dbReference>
<dbReference type="CDD" id="cd19542">
    <property type="entry name" value="CT_NRPS-like"/>
    <property type="match status" value="1"/>
</dbReference>
<dbReference type="CDD" id="cd19545">
    <property type="entry name" value="FUM14_C_NRPS-like"/>
    <property type="match status" value="1"/>
</dbReference>
<dbReference type="CDD" id="cd19531">
    <property type="entry name" value="LCL_NRPS-like"/>
    <property type="match status" value="1"/>
</dbReference>
<dbReference type="FunFam" id="3.30.300.30:FF:000084">
    <property type="entry name" value="Enniatin synthase"/>
    <property type="match status" value="1"/>
</dbReference>
<dbReference type="FunFam" id="3.30.559.30:FF:000001">
    <property type="entry name" value="Non-ribosomal peptide synthetase"/>
    <property type="match status" value="1"/>
</dbReference>
<dbReference type="FunFam" id="3.30.300.30:FF:000015">
    <property type="entry name" value="Nonribosomal peptide synthase SidD"/>
    <property type="match status" value="1"/>
</dbReference>
<dbReference type="Gene3D" id="3.30.300.30">
    <property type="match status" value="3"/>
</dbReference>
<dbReference type="Gene3D" id="3.40.50.980">
    <property type="match status" value="2"/>
</dbReference>
<dbReference type="Gene3D" id="1.10.1200.10">
    <property type="entry name" value="ACP-like"/>
    <property type="match status" value="3"/>
</dbReference>
<dbReference type="Gene3D" id="3.30.559.10">
    <property type="entry name" value="Chloramphenicol acetyltransferase-like domain"/>
    <property type="match status" value="3"/>
</dbReference>
<dbReference type="Gene3D" id="2.30.38.10">
    <property type="entry name" value="Luciferase, Domain 3"/>
    <property type="match status" value="1"/>
</dbReference>
<dbReference type="Gene3D" id="3.40.50.12780">
    <property type="entry name" value="N-terminal domain of ligase-like"/>
    <property type="match status" value="1"/>
</dbReference>
<dbReference type="Gene3D" id="3.30.559.30">
    <property type="entry name" value="Nonribosomal peptide synthetase, condensation domain"/>
    <property type="match status" value="3"/>
</dbReference>
<dbReference type="Gene3D" id="3.40.50.150">
    <property type="entry name" value="Vaccinia Virus protein VP39"/>
    <property type="match status" value="1"/>
</dbReference>
<dbReference type="InterPro" id="IPR010071">
    <property type="entry name" value="AA_adenyl_dom"/>
</dbReference>
<dbReference type="InterPro" id="IPR036736">
    <property type="entry name" value="ACP-like_sf"/>
</dbReference>
<dbReference type="InterPro" id="IPR045851">
    <property type="entry name" value="AMP-bd_C_sf"/>
</dbReference>
<dbReference type="InterPro" id="IPR020845">
    <property type="entry name" value="AMP-binding_CS"/>
</dbReference>
<dbReference type="InterPro" id="IPR000873">
    <property type="entry name" value="AMP-dep_synth/lig_dom"/>
</dbReference>
<dbReference type="InterPro" id="IPR042099">
    <property type="entry name" value="ANL_N_sf"/>
</dbReference>
<dbReference type="InterPro" id="IPR023213">
    <property type="entry name" value="CAT-like_dom_sf"/>
</dbReference>
<dbReference type="InterPro" id="IPR001242">
    <property type="entry name" value="Condensatn"/>
</dbReference>
<dbReference type="InterPro" id="IPR020806">
    <property type="entry name" value="PKS_PP-bd"/>
</dbReference>
<dbReference type="InterPro" id="IPR009081">
    <property type="entry name" value="PP-bd_ACP"/>
</dbReference>
<dbReference type="InterPro" id="IPR006162">
    <property type="entry name" value="Ppantetheine_attach_site"/>
</dbReference>
<dbReference type="InterPro" id="IPR029063">
    <property type="entry name" value="SAM-dependent_MTases_sf"/>
</dbReference>
<dbReference type="NCBIfam" id="TIGR01733">
    <property type="entry name" value="AA-adenyl-dom"/>
    <property type="match status" value="1"/>
</dbReference>
<dbReference type="PANTHER" id="PTHR45527:SF1">
    <property type="entry name" value="FATTY ACID SYNTHASE"/>
    <property type="match status" value="1"/>
</dbReference>
<dbReference type="PANTHER" id="PTHR45527">
    <property type="entry name" value="NONRIBOSOMAL PEPTIDE SYNTHETASE"/>
    <property type="match status" value="1"/>
</dbReference>
<dbReference type="Pfam" id="PF00501">
    <property type="entry name" value="AMP-binding"/>
    <property type="match status" value="2"/>
</dbReference>
<dbReference type="Pfam" id="PF00668">
    <property type="entry name" value="Condensation"/>
    <property type="match status" value="3"/>
</dbReference>
<dbReference type="Pfam" id="PF00550">
    <property type="entry name" value="PP-binding"/>
    <property type="match status" value="3"/>
</dbReference>
<dbReference type="SMART" id="SM00823">
    <property type="entry name" value="PKS_PP"/>
    <property type="match status" value="3"/>
</dbReference>
<dbReference type="SUPFAM" id="SSF56801">
    <property type="entry name" value="Acetyl-CoA synthetase-like"/>
    <property type="match status" value="2"/>
</dbReference>
<dbReference type="SUPFAM" id="SSF47336">
    <property type="entry name" value="ACP-like"/>
    <property type="match status" value="3"/>
</dbReference>
<dbReference type="SUPFAM" id="SSF52777">
    <property type="entry name" value="CoA-dependent acyltransferases"/>
    <property type="match status" value="6"/>
</dbReference>
<dbReference type="SUPFAM" id="SSF53335">
    <property type="entry name" value="S-adenosyl-L-methionine-dependent methyltransferases"/>
    <property type="match status" value="1"/>
</dbReference>
<dbReference type="PROSITE" id="PS00455">
    <property type="entry name" value="AMP_BINDING"/>
    <property type="match status" value="2"/>
</dbReference>
<dbReference type="PROSITE" id="PS50075">
    <property type="entry name" value="CARRIER"/>
    <property type="match status" value="3"/>
</dbReference>
<dbReference type="PROSITE" id="PS00012">
    <property type="entry name" value="PHOSPHOPANTETHEINE"/>
    <property type="match status" value="3"/>
</dbReference>
<comment type="function">
    <text evidence="1 2 6 7 8">Beauvericin nonribosomal cyclodepsipeptide synthetase; part of the gene cluster that mediates the biosynthesis of beauvericin (BEA), a non-ribosomal cyclic hexadepsipeptide that shows antibiotic, antifungal, insecticidal, and cancer cell antiproliferative and antihaptotactic activity (PubMed:25543026, PubMed:27750383, PubMed:28125067). Ketoisovalerate reductase BEA2 catalyzes the NADPH-specific reduction of ketoisovaleric acid to hydroxyisovalerate, a precursor for beauvericin biosynthesis (By similarity). The nonribosomal cyclodepsipeptide synthetase BEA1 then catalyzes the formation of beauvericin via condensation and cyclization of 3 dipeptidol monomers, each composed of one unit of hydroxyisovalerate and one unit of N-methyl-phenylalanine (By similarity).</text>
</comment>
<comment type="catalytic activity">
    <reaction evidence="1">
        <text>3 (R)-2-hydroxy-3-methylbutanoate + 3 L-phenylalanine + 3 S-adenosyl-L-methionine + 6 ATP = beauvericin + 6 AMP + 3 S-adenosyl-L-homocysteine + 6 diphosphate + 6 H(+)</text>
        <dbReference type="Rhea" id="RHEA:62276"/>
        <dbReference type="ChEBI" id="CHEBI:3000"/>
        <dbReference type="ChEBI" id="CHEBI:15378"/>
        <dbReference type="ChEBI" id="CHEBI:30616"/>
        <dbReference type="ChEBI" id="CHEBI:33019"/>
        <dbReference type="ChEBI" id="CHEBI:57856"/>
        <dbReference type="ChEBI" id="CHEBI:58095"/>
        <dbReference type="ChEBI" id="CHEBI:59789"/>
        <dbReference type="ChEBI" id="CHEBI:145660"/>
        <dbReference type="ChEBI" id="CHEBI:456215"/>
    </reaction>
    <physiologicalReaction direction="left-to-right" evidence="1">
        <dbReference type="Rhea" id="RHEA:62277"/>
    </physiologicalReaction>
</comment>
<comment type="induction">
    <text evidence="7">Expression is highly repressed by the histone deacetylase HDA1 and the beauvericin cluster-specific repressor BEA4 (PubMed:27750383). BEA biosynthesis is also repressed by the activity of the H3K27 methyltransferase KMT6 (PubMed:27750383).</text>
</comment>
<comment type="domain">
    <text evidence="1 13">NRP synthetases are composed of discrete domains (adenylation (A), thiolation (T) or peptidyl carrier protein (PCP) and condensation (C) domains) which when grouped together are referred to as a single module. Each module is responsible for the recognition (via the A domain) and incorporation of a single amino acid into the growing peptide product. Thus, an NRP synthetase is generally composed of one or more modules and can terminate in a thioesterase domain (TE) that releases the newly synthesized peptide from the enzyme. Occasionally, additional domains required for further modifications are also present. Beauvericin synthetase has the C1-A1-T1-C2-A2-MT-T2a-T2b-C3 domain organization (PubMed:28125067). During catalysis, C3 and C2 take turns to incorporate the two biosynthetic precursors into the growing depsipeptide chain that swings between T1 and T2a/T2b with C3 cyclizing the chain when it reaches the full length (By similarity).</text>
</comment>
<comment type="disruption phenotype">
    <text evidence="7">Leads to complete loss of beauvericin biosynthesis (PubMed:27750383).</text>
</comment>
<comment type="similarity">
    <text evidence="12">Belongs to the NRP synthetase family.</text>
</comment>
<protein>
    <recommendedName>
        <fullName evidence="11">Beauvericin nonribosomal cyclodepsipeptide synthetase BEA1</fullName>
        <shortName evidence="1">BEAS</shortName>
    </recommendedName>
    <alternativeName>
        <fullName evidence="10">Beauvericin biosynthesis cluster protein 1</fullName>
    </alternativeName>
    <domain>
        <recommendedName>
            <fullName evidence="1">Nonribosomal peptide synthetase</fullName>
            <ecNumber evidence="1">6.1.2.-</ecNumber>
        </recommendedName>
    </domain>
    <domain>
        <recommendedName>
            <fullName evidence="1">S-adenosyl-L-methionine-dependent N-methyltransferase</fullName>
            <ecNumber evidence="1">2.1.1.-</ecNumber>
        </recommendedName>
    </domain>
</protein>
<organism>
    <name type="scientific">Gibberella fujikuroi (strain CBS 195.34 / IMI 58289 / NRRL A-6831)</name>
    <name type="common">Bakanae and foot rot disease fungus</name>
    <name type="synonym">Fusarium fujikuroi</name>
    <dbReference type="NCBI Taxonomy" id="1279085"/>
    <lineage>
        <taxon>Eukaryota</taxon>
        <taxon>Fungi</taxon>
        <taxon>Dikarya</taxon>
        <taxon>Ascomycota</taxon>
        <taxon>Pezizomycotina</taxon>
        <taxon>Sordariomycetes</taxon>
        <taxon>Hypocreomycetidae</taxon>
        <taxon>Hypocreales</taxon>
        <taxon>Nectriaceae</taxon>
        <taxon>Fusarium</taxon>
        <taxon>Fusarium fujikuroi species complex</taxon>
    </lineage>
</organism>
<feature type="chain" id="PRO_0000442145" description="Beauvericin nonribosomal cyclodepsipeptide synthetase BEA1">
    <location>
        <begin position="1"/>
        <end position="3135"/>
    </location>
</feature>
<feature type="domain" description="Carrier 1" evidence="4 13">
    <location>
        <begin position="1021"/>
        <end position="1097"/>
    </location>
</feature>
<feature type="domain" description="Carrier 2" evidence="4 13">
    <location>
        <begin position="2509"/>
        <end position="2583"/>
    </location>
</feature>
<feature type="domain" description="Carrier 3" evidence="4 13">
    <location>
        <begin position="2603"/>
        <end position="2677"/>
    </location>
</feature>
<feature type="region of interest" description="Condensation 1" evidence="3 13">
    <location>
        <begin position="70"/>
        <end position="458"/>
    </location>
</feature>
<feature type="region of interest" description="Disordered" evidence="5">
    <location>
        <begin position="196"/>
        <end position="228"/>
    </location>
</feature>
<feature type="region of interest" description="Adenylation 1" evidence="3 13">
    <location>
        <begin position="499"/>
        <end position="896"/>
    </location>
</feature>
<feature type="region of interest" description="Condensation 2" evidence="3 13">
    <location>
        <begin position="1115"/>
        <end position="1542"/>
    </location>
</feature>
<feature type="region of interest" description="Adenylation 2" evidence="3 13">
    <location>
        <begin position="1571"/>
        <end position="1974"/>
    </location>
</feature>
<feature type="region of interest" description="S-adenosyl-L-methionine-dependent N-methyltransferase" evidence="3 13">
    <location>
        <begin position="2042"/>
        <end position="2182"/>
    </location>
</feature>
<feature type="region of interest" description="Condensation 3" evidence="3 13">
    <location>
        <begin position="2721"/>
        <end position="3127"/>
    </location>
</feature>
<feature type="modified residue" description="O-(pantetheine 4'-phosphoryl)serine" evidence="4">
    <location>
        <position position="1058"/>
    </location>
</feature>
<feature type="modified residue" description="O-(pantetheine 4'-phosphoryl)serine" evidence="4">
    <location>
        <position position="2543"/>
    </location>
</feature>
<feature type="modified residue" description="O-(pantetheine 4'-phosphoryl)serine" evidence="4">
    <location>
        <position position="2637"/>
    </location>
</feature>
<reference key="1">
    <citation type="journal article" date="2013" name="PLoS Pathog.">
        <title>Deciphering the cryptic genome: genome-wide analyses of the rice pathogen Fusarium fujikuroi reveal complex regulation of secondary metabolism and novel metabolites.</title>
        <authorList>
            <person name="Wiemann P."/>
            <person name="Sieber C.M.K."/>
            <person name="von Bargen K.W."/>
            <person name="Studt L."/>
            <person name="Niehaus E.-M."/>
            <person name="Espino J.J."/>
            <person name="Huss K."/>
            <person name="Michielse C.B."/>
            <person name="Albermann S."/>
            <person name="Wagner D."/>
            <person name="Bergner S.V."/>
            <person name="Connolly L.R."/>
            <person name="Fischer A."/>
            <person name="Reuter G."/>
            <person name="Kleigrewe K."/>
            <person name="Bald T."/>
            <person name="Wingfield B.D."/>
            <person name="Ophir R."/>
            <person name="Freeman S."/>
            <person name="Hippler M."/>
            <person name="Smith K.M."/>
            <person name="Brown D.W."/>
            <person name="Proctor R.H."/>
            <person name="Muensterkoetter M."/>
            <person name="Freitag M."/>
            <person name="Humpf H.-U."/>
            <person name="Gueldener U."/>
            <person name="Tudzynski B."/>
        </authorList>
    </citation>
    <scope>NUCLEOTIDE SEQUENCE [LARGE SCALE GENOMIC DNA]</scope>
    <scope>IDENTIFICATION</scope>
    <source>
        <strain>CBS 195.34 / IMI 58289 / NRRL A-6831</strain>
    </source>
</reference>
<reference key="2">
    <citation type="journal article" date="2015" name="Fungal Genet. Biol.">
        <title>An update to polyketide synthase and non-ribosomal synthetase genes and nomenclature in Fusarium.</title>
        <authorList>
            <person name="Hansen F.T."/>
            <person name="Gardiner D.M."/>
            <person name="Lysoee E."/>
            <person name="Fuertes P.R."/>
            <person name="Tudzynski B."/>
            <person name="Wiemann P."/>
            <person name="Sondergaard T.E."/>
            <person name="Giese H."/>
            <person name="Brodersen D.E."/>
            <person name="Soerensen J.L."/>
        </authorList>
    </citation>
    <scope>FUNCTION</scope>
</reference>
<reference key="3">
    <citation type="journal article" date="2016" name="Environ. Microbiol.">
        <title>Sound of silence: the beauvericin cluster in Fusarium fujikuroi is controlled by cluster-specific and global regulators mediated by H3K27 modification.</title>
        <authorList>
            <person name="Niehaus E.M."/>
            <person name="Studt L."/>
            <person name="von Bargen K.W."/>
            <person name="Kummer W."/>
            <person name="Humpf H.U."/>
            <person name="Reuter G."/>
            <person name="Tudzynski B."/>
        </authorList>
    </citation>
    <scope>FUNCTION</scope>
    <scope>INDUCTION</scope>
    <scope>DISRUPTION PHENOTYPE</scope>
</reference>
<reference key="4">
    <citation type="journal article" date="2017" name="Toxins">
        <title>Enniatin and beauvericin biosynthesis in Fusarium species: production profiles and structural determinant prediction.</title>
        <authorList>
            <person name="Liuzzi V.C."/>
            <person name="Mirabelli V."/>
            <person name="Cimmarusti M.T."/>
            <person name="Haidukowski M."/>
            <person name="Leslie J.F."/>
            <person name="Logrieco A.F."/>
            <person name="Caliandro R."/>
            <person name="Fanelli F."/>
            <person name="Mule G."/>
        </authorList>
    </citation>
    <scope>FUNCTION</scope>
    <scope>DOMAIN</scope>
</reference>
<evidence type="ECO:0000250" key="1">
    <source>
        <dbReference type="UniProtKB" id="B6D9A8"/>
    </source>
</evidence>
<evidence type="ECO:0000250" key="2">
    <source>
        <dbReference type="UniProtKB" id="G3GBU6"/>
    </source>
</evidence>
<evidence type="ECO:0000255" key="3"/>
<evidence type="ECO:0000255" key="4">
    <source>
        <dbReference type="PROSITE-ProRule" id="PRU00258"/>
    </source>
</evidence>
<evidence type="ECO:0000256" key="5">
    <source>
        <dbReference type="SAM" id="MobiDB-lite"/>
    </source>
</evidence>
<evidence type="ECO:0000269" key="6">
    <source>
    </source>
</evidence>
<evidence type="ECO:0000269" key="7">
    <source>
    </source>
</evidence>
<evidence type="ECO:0000269" key="8">
    <source>
    </source>
</evidence>
<evidence type="ECO:0000303" key="9">
    <source>
    </source>
</evidence>
<evidence type="ECO:0000303" key="10">
    <source>
    </source>
</evidence>
<evidence type="ECO:0000303" key="11">
    <source>
    </source>
</evidence>
<evidence type="ECO:0000305" key="12"/>
<evidence type="ECO:0000305" key="13">
    <source>
    </source>
</evidence>
<proteinExistence type="evidence at transcript level"/>
<accession>S0EN43</accession>
<gene>
    <name evidence="10" type="primary">BEA1</name>
    <name evidence="9" type="synonym">NRPS22</name>
    <name type="ORF">FFUJ_09296</name>
</gene>
<keyword id="KW-0413">Isomerase</keyword>
<keyword id="KW-0436">Ligase</keyword>
<keyword id="KW-0489">Methyltransferase</keyword>
<keyword id="KW-0511">Multifunctional enzyme</keyword>
<keyword id="KW-0596">Phosphopantetheine</keyword>
<keyword id="KW-0597">Phosphoprotein</keyword>
<keyword id="KW-1185">Reference proteome</keyword>
<keyword id="KW-0677">Repeat</keyword>
<keyword id="KW-0949">S-adenosyl-L-methionine</keyword>
<keyword id="KW-0808">Transferase</keyword>